<feature type="signal peptide">
    <location>
        <begin position="1"/>
        <end status="unknown"/>
    </location>
</feature>
<feature type="propeptide" id="PRO_0000001618" evidence="10">
    <location>
        <begin status="unknown"/>
        <end position="28"/>
    </location>
</feature>
<feature type="chain" id="PRO_0000001619" description="Delta-latroinsectotoxin-Lt1a" evidence="10">
    <location>
        <begin position="29"/>
        <end position="1019"/>
    </location>
</feature>
<feature type="propeptide" id="PRO_0000001620" description="C-terminal domain cleavage is required for toxin activation" evidence="9">
    <location>
        <begin position="1020"/>
        <end position="1214"/>
    </location>
</feature>
<feature type="repeat" description="ANK 1" evidence="3">
    <location>
        <begin position="464"/>
        <end position="497"/>
    </location>
</feature>
<feature type="repeat" description="ANK 2" evidence="3">
    <location>
        <begin position="501"/>
        <end position="532"/>
    </location>
</feature>
<feature type="repeat" description="ANK 3" evidence="3">
    <location>
        <begin position="536"/>
        <end position="565"/>
    </location>
</feature>
<feature type="repeat" description="ANK 4" evidence="3">
    <location>
        <begin position="570"/>
        <end position="600"/>
    </location>
</feature>
<feature type="repeat" description="ANK 5" evidence="3">
    <location>
        <begin position="604"/>
        <end position="633"/>
    </location>
</feature>
<feature type="repeat" description="ANK 6" evidence="3">
    <location>
        <begin position="637"/>
        <end position="666"/>
    </location>
</feature>
<feature type="repeat" description="ANK 7" evidence="3">
    <location>
        <begin position="670"/>
        <end position="699"/>
    </location>
</feature>
<feature type="repeat" description="ANK 8" evidence="3">
    <location>
        <begin position="706"/>
        <end position="734"/>
    </location>
</feature>
<feature type="repeat" description="ANK 9" evidence="3">
    <location>
        <begin position="740"/>
        <end position="769"/>
    </location>
</feature>
<feature type="repeat" description="ANK 10" evidence="3">
    <location>
        <begin position="773"/>
        <end position="802"/>
    </location>
</feature>
<feature type="repeat" description="ANK 11" evidence="3">
    <location>
        <begin position="806"/>
        <end position="835"/>
    </location>
</feature>
<feature type="repeat" description="ANK 12" evidence="3">
    <location>
        <begin position="839"/>
        <end position="868"/>
    </location>
</feature>
<feature type="repeat" description="ANK 13" evidence="3">
    <location>
        <begin position="872"/>
        <end position="901"/>
    </location>
</feature>
<feature type="repeat" description="ANK 14" evidence="3">
    <location>
        <begin position="906"/>
        <end position="936"/>
    </location>
</feature>
<feature type="repeat" description="ANK 15" evidence="3">
    <location>
        <begin position="966"/>
        <end position="994"/>
    </location>
</feature>
<feature type="region of interest" description="Helix H2 is the probable transmembrane region of the tetrameric pore inserted in the target cell membrane" evidence="2">
    <location>
        <begin position="64"/>
        <end position="89"/>
    </location>
</feature>
<feature type="region of interest" description="Helix H8 is the probable transmembrane region of the tetrameric pore inserted in the target cell membrane" evidence="2">
    <location>
        <begin position="250"/>
        <end position="269"/>
    </location>
</feature>
<comment type="function">
    <text evidence="1 4 5">Insecticidal presynaptic neurotoxin that induces massive neurotransmitter release at insect (but not vertebrate) neuromuscular junctions. Native toxin forms cation-permeable pores (with high permeability to calcium) in lipid membranes locust muscle membrane and artificial lipid bilayers (PubMed:34845192, PubMed:8631785). May bind to insect neurexin-1 homolog, insect adhesion G protein-coupled receptor L1 homolog, and insect receptor-type tyrosine-protein phosphatase S homolog, and induces neurotransmitter exocytosis both by forming tetrameric pores in membranes and signaling via G protein-coupled receptor (By similarity). Oligomerization is a process independent of divalent cations (PubMed:34845192).</text>
</comment>
<comment type="subunit">
    <text evidence="4">Homotetramer in membrane.</text>
</comment>
<comment type="subcellular location">
    <subcellularLocation>
        <location evidence="5 6">Secreted</location>
    </subcellularLocation>
    <subcellularLocation>
        <location evidence="4">Target cell membrane</location>
    </subcellularLocation>
    <text evidence="9">Forms a membrane channel in the prey.</text>
</comment>
<comment type="tissue specificity">
    <text evidence="10">Expressed by the venom gland.</text>
</comment>
<comment type="domain">
    <text evidence="4">Two helices (H2 and H8) are predicted to insert into membranes and form pores by assembling into tetramers. The helices are contained within a helical bundle domain that undergoes significant conformational changes during pore formation to allow exposure of the transmembrane helices and transition of the toxin from a soluble monomer to a transmembrane tetramer.</text>
</comment>
<comment type="mass spectrometry" mass="110916.0" error="100.0" method="MALDI" evidence="5"/>
<comment type="toxic dose">
    <text evidence="6">LD(50) is 60 ug/kg to insect (Galleria mellonella) larvae.</text>
</comment>
<comment type="similarity">
    <text evidence="8">Belongs to the cationic peptide 01 (latrotoxin) family. 04 (delta-latroinsectotoxin) subfamily.</text>
</comment>
<protein>
    <recommendedName>
        <fullName evidence="8">Delta-latroinsectotoxin-Lt1a</fullName>
        <shortName evidence="8">Delta-LIT-Lt1a</shortName>
    </recommendedName>
    <alternativeName>
        <fullName evidence="7">Delta-latroinsectotoxin</fullName>
        <shortName evidence="7">Delta-LIT</shortName>
    </alternativeName>
</protein>
<proteinExistence type="evidence at protein level"/>
<evidence type="ECO:0000250" key="1">
    <source>
        <dbReference type="UniProtKB" id="P23631"/>
    </source>
</evidence>
<evidence type="ECO:0000250" key="2">
    <source>
        <dbReference type="UniProtKB" id="Q9XZC0"/>
    </source>
</evidence>
<evidence type="ECO:0000255" key="3"/>
<evidence type="ECO:0000269" key="4">
    <source>
    </source>
</evidence>
<evidence type="ECO:0000269" key="5">
    <source>
    </source>
</evidence>
<evidence type="ECO:0000269" key="6">
    <source>
    </source>
</evidence>
<evidence type="ECO:0000303" key="7">
    <source>
    </source>
</evidence>
<evidence type="ECO:0000305" key="8"/>
<evidence type="ECO:0000305" key="9">
    <source>
    </source>
</evidence>
<evidence type="ECO:0000305" key="10">
    <source>
    </source>
</evidence>
<accession>Q25338</accession>
<keyword id="KW-0002">3D-structure</keyword>
<keyword id="KW-0040">ANK repeat</keyword>
<keyword id="KW-0165">Cleavage on pair of basic residues</keyword>
<keyword id="KW-0903">Direct protein sequencing</keyword>
<keyword id="KW-0268">Exocytosis</keyword>
<keyword id="KW-0472">Membrane</keyword>
<keyword id="KW-0528">Neurotoxin</keyword>
<keyword id="KW-0638">Presynaptic neurotoxin</keyword>
<keyword id="KW-0677">Repeat</keyword>
<keyword id="KW-0964">Secreted</keyword>
<keyword id="KW-0732">Signal</keyword>
<keyword id="KW-1052">Target cell membrane</keyword>
<keyword id="KW-1053">Target membrane</keyword>
<keyword id="KW-0800">Toxin</keyword>
<keyword id="KW-0812">Transmembrane</keyword>
<sequence length="1214" mass="135822">MHSKELQTISAAVARKAVPNTMVIRLKRDEEDGEMTLEERQAQCKAIEYSNSVFGMIADVANDIGSIPVIGEVVGIVTAPIAIVSHITSAGLDIASTALDCDDIPFDEIKEILEERFNEIDRKLDKNTAALEEVSKLVSKTFVTVEKTRNEMNENFKLVLETIESKEIKSIVFKINDFKKFFEKERQRIKGLPKDRYVAKLLEQKGILGSLKEVREPSGNSLSSALNELLDKNNNYAIPKVVDDNKAFQALYALFYGTQTYAAVMFFLLEQHSYLADYYYQKGDDVNFNAEFNNVAIIFDDFKSSLTGGDDGLIDNVIEVLNTVKALPFIKNADSKLYRELVTRTKALETLKNQIKTTDLPLIDDIPETLSQVNFPNDENQLPTPIGNWVDGVEVRYAVQYESKGMYSKFSEWSEPFTVQGNACPTIKVRVDPKKRNRLIFRKFNSGKPQFAGTMTHSQTNFKDIHRDLYDAALNINKLKAVDEATTLIEKGADIEAKFDNDRSAMHAVAYRGNNKIALRFLLKNQSIDIELKDKNGFTPLHIAAEAGQAGFVKLLINHGADVNAKTSKTNLTPLHLATRSGFSKTVRNLLESPNIKVNEKEDDGFTPLHTAVMSTYMVVDALLNHPDIDKNAQSTSGLTPFHLAIINESQEVAESLVESNADLNIQDVNHMAPIHFAASMGSIKMLRYLISIKDKVSINSVTENNNWTPLHFAIYFKKEDAAKELLKQDDINLTIVADGNLTVLHLAVSTGQINIIKELLKRGSNIEEKTGEGYTSLHIAAMRKEPEIAVVLIENGADIEARSADNLTPLHSAAKIGRKSTVLYLLEKGADIGAKTADGSTALHLAVSGRKMKTVETLLNKGANLKEYDNNKYLPIHKAIINDDLDMVRLFLEKDPSLKDDETEEGRTSIMLIVQKLLLELYNYFINNYAETLDEEALFNRLDEQGKLELAYIFHNKEGDAKEAVKPTILVTIKLMEYCLKKLREESGAPEGSFDSPSSKQCISTFSEDEMFRRTLPEIVKETNSRYLPLKGFSRSLNKFLPSLKFAESKNSYRSENFVSNIDSNGALLLLDVFIRKFTNEKYNLTGKEAVPYLEAKASSLRIASKFEELLTEVKGIPAGELINMAEVSSNIHKAIASGKPVSKVLCSYLDTFSELNSQQMEELVNTYLSTKPSVITSASADYQKLPNLLTATCLEPERMAQLIDVHQKMFLR</sequence>
<name>LITD_LATTR</name>
<dbReference type="EMBL" id="X92679">
    <property type="protein sequence ID" value="CAA63363.1"/>
    <property type="molecule type" value="mRNA"/>
</dbReference>
<dbReference type="PDB" id="7PTY">
    <property type="method" value="EM"/>
    <property type="resolution" value="4.63 A"/>
    <property type="chains" value="A=1-1214"/>
</dbReference>
<dbReference type="PDBsum" id="7PTY"/>
<dbReference type="EMDB" id="EMD-13643"/>
<dbReference type="SMR" id="Q25338"/>
<dbReference type="ArachnoServer" id="AS000063">
    <property type="toxin name" value="delta-Latroinsectotoxin-Lt1a"/>
</dbReference>
<dbReference type="GO" id="GO:0005576">
    <property type="term" value="C:extracellular region"/>
    <property type="evidence" value="ECO:0007669"/>
    <property type="project" value="UniProtKB-SubCell"/>
</dbReference>
<dbReference type="GO" id="GO:0044231">
    <property type="term" value="C:host cell presynaptic membrane"/>
    <property type="evidence" value="ECO:0007669"/>
    <property type="project" value="UniProtKB-KW"/>
</dbReference>
<dbReference type="GO" id="GO:0016020">
    <property type="term" value="C:membrane"/>
    <property type="evidence" value="ECO:0007669"/>
    <property type="project" value="UniProtKB-KW"/>
</dbReference>
<dbReference type="GO" id="GO:0044218">
    <property type="term" value="C:other organism cell membrane"/>
    <property type="evidence" value="ECO:0007669"/>
    <property type="project" value="UniProtKB-KW"/>
</dbReference>
<dbReference type="GO" id="GO:0090729">
    <property type="term" value="F:toxin activity"/>
    <property type="evidence" value="ECO:0007669"/>
    <property type="project" value="UniProtKB-KW"/>
</dbReference>
<dbReference type="GO" id="GO:0006887">
    <property type="term" value="P:exocytosis"/>
    <property type="evidence" value="ECO:0007669"/>
    <property type="project" value="UniProtKB-KW"/>
</dbReference>
<dbReference type="Gene3D" id="1.25.40.20">
    <property type="entry name" value="Ankyrin repeat-containing domain"/>
    <property type="match status" value="5"/>
</dbReference>
<dbReference type="InterPro" id="IPR002110">
    <property type="entry name" value="Ankyrin_rpt"/>
</dbReference>
<dbReference type="InterPro" id="IPR036770">
    <property type="entry name" value="Ankyrin_rpt-contain_sf"/>
</dbReference>
<dbReference type="InterPro" id="IPR051165">
    <property type="entry name" value="Multifunctional_ANK_Repeat"/>
</dbReference>
<dbReference type="PANTHER" id="PTHR24123">
    <property type="entry name" value="ANKYRIN REPEAT-CONTAINING"/>
    <property type="match status" value="1"/>
</dbReference>
<dbReference type="PANTHER" id="PTHR24123:SF33">
    <property type="entry name" value="PROTEIN HOS4"/>
    <property type="match status" value="1"/>
</dbReference>
<dbReference type="Pfam" id="PF00023">
    <property type="entry name" value="Ank"/>
    <property type="match status" value="1"/>
</dbReference>
<dbReference type="Pfam" id="PF12796">
    <property type="entry name" value="Ank_2"/>
    <property type="match status" value="4"/>
</dbReference>
<dbReference type="PRINTS" id="PR01415">
    <property type="entry name" value="ANKYRIN"/>
</dbReference>
<dbReference type="SMART" id="SM00248">
    <property type="entry name" value="ANK"/>
    <property type="match status" value="13"/>
</dbReference>
<dbReference type="SUPFAM" id="SSF48403">
    <property type="entry name" value="Ankyrin repeat"/>
    <property type="match status" value="2"/>
</dbReference>
<dbReference type="PROSITE" id="PS50297">
    <property type="entry name" value="ANK_REP_REGION"/>
    <property type="match status" value="1"/>
</dbReference>
<dbReference type="PROSITE" id="PS50088">
    <property type="entry name" value="ANK_REPEAT"/>
    <property type="match status" value="6"/>
</dbReference>
<reference key="1">
    <citation type="journal article" date="1996" name="J. Biol. Chem.">
        <title>Cloning and structure of delta-latroinsectotoxin, a novel insect-specific member of the latrotoxin family: functional expression requires C-terminal truncation.</title>
        <authorList>
            <person name="Dulubova I.E."/>
            <person name="Krasnoperov V.G."/>
            <person name="Khvotchev M.V."/>
            <person name="Pluzhnikov K.A."/>
            <person name="Volkova T.M."/>
            <person name="Grishin E.V."/>
            <person name="Vais H."/>
            <person name="Bell D.R."/>
            <person name="Usherwood P.N.R."/>
        </authorList>
    </citation>
    <scope>NUCLEOTIDE SEQUENCE [MRNA]</scope>
    <scope>PROTEIN SEQUENCE OF 29-52; 409-420; 481-487; 589-596; 598-617; 771-784; 880-886 AND 891-906</scope>
    <scope>MASS SPECTROMETRY</scope>
    <scope>SUBCELLULAR LOCATION</scope>
    <scope>PROTEOLYTIC PROCESSING OF C-TERMINAL</scope>
    <scope>FUNCTION</scope>
    <scope>RECOMBINANT EXPRESSION</scope>
    <source>
        <tissue>Venom</tissue>
        <tissue>Venom gland</tissue>
    </source>
</reference>
<reference key="2">
    <citation type="journal article" date="1996" name="Bioorg. Khim.">
        <title>Primary structure of delta-latroinsectotoxin from venom of the Latrodectus mactans tredecimguttatus spider.</title>
        <authorList>
            <person name="Dulubova I.E."/>
            <person name="Khvoshchev M.V."/>
            <person name="Krasnoperov V.G."/>
            <person name="Galkina T.G."/>
            <person name="Pluzhnikov K.A."/>
            <person name="Volkova T.M."/>
            <person name="Grishin E.V."/>
        </authorList>
    </citation>
    <scope>NUCLEOTIDE SEQUENCE [MRNA]</scope>
    <source>
        <tissue>Venom gland</tissue>
    </source>
</reference>
<reference key="3">
    <citation type="journal article" date="1998" name="Toxicon">
        <title>Black widow spider toxins: the present and the future.</title>
        <authorList>
            <person name="Grishin E.V."/>
        </authorList>
    </citation>
    <scope>TOXIC DOSE</scope>
    <scope>SUBCELLULAR LOCATION</scope>
    <source>
        <tissue>Venom</tissue>
    </source>
</reference>
<reference key="4">
    <citation type="journal article" date="2000" name="Biochimie">
        <title>Tetramerisation of alpha-latrotoxin by divalent cations is responsible for toxin-induced non-vesicular release and contributes to the Ca(2+)-dependent vesicular exocytosis from synaptosomes.</title>
        <authorList>
            <person name="Ashton A.C."/>
            <person name="Rahman M.A."/>
            <person name="Volynski K.E."/>
            <person name="Manser C."/>
            <person name="Orlova E.V."/>
            <person name="Matsushita H."/>
            <person name="Davletov B.A."/>
            <person name="van Heel M."/>
            <person name="Grishin E.V."/>
            <person name="Ushkaryov Y.A."/>
        </authorList>
    </citation>
    <scope>SUBUNIT</scope>
</reference>
<reference key="5">
    <citation type="journal article" date="2021" name="Nat. Commun.">
        <title>Molecular architecture of black widow spider neurotoxins.</title>
        <authorList>
            <person name="Chen M."/>
            <person name="Blum D."/>
            <person name="Engelhard L."/>
            <person name="Raunser S."/>
            <person name="Wagner R."/>
            <person name="Gatsogiannis C."/>
        </authorList>
    </citation>
    <scope>STRUCTURE BY ELECTRON MICROSCOPY (4.63 ANGSTROMS) OF 50-928 IN DIMERIC FORM</scope>
    <scope>FUNCTION</scope>
    <scope>RECOMBINANT EXPRESSION</scope>
    <scope>SUBUNIT</scope>
</reference>
<organism>
    <name type="scientific">Latrodectus tredecimguttatus</name>
    <name type="common">Mediterranean black widow spider</name>
    <name type="synonym">Latrodectus mactans tredecimguttatus</name>
    <dbReference type="NCBI Taxonomy" id="6925"/>
    <lineage>
        <taxon>Eukaryota</taxon>
        <taxon>Metazoa</taxon>
        <taxon>Ecdysozoa</taxon>
        <taxon>Arthropoda</taxon>
        <taxon>Chelicerata</taxon>
        <taxon>Arachnida</taxon>
        <taxon>Araneae</taxon>
        <taxon>Araneomorphae</taxon>
        <taxon>Entelegynae</taxon>
        <taxon>Araneoidea</taxon>
        <taxon>Theridiidae</taxon>
        <taxon>Latrodectus</taxon>
    </lineage>
</organism>